<gene>
    <name evidence="1" type="primary">hisF</name>
    <name type="ordered locus">cauri_1617</name>
</gene>
<protein>
    <recommendedName>
        <fullName evidence="1">Imidazole glycerol phosphate synthase subunit HisF</fullName>
        <ecNumber evidence="1">4.3.2.10</ecNumber>
    </recommendedName>
    <alternativeName>
        <fullName evidence="1">IGP synthase cyclase subunit</fullName>
    </alternativeName>
    <alternativeName>
        <fullName evidence="1">IGP synthase subunit HisF</fullName>
    </alternativeName>
    <alternativeName>
        <fullName evidence="1">ImGP synthase subunit HisF</fullName>
        <shortName evidence="1">IGPS subunit HisF</shortName>
    </alternativeName>
</protein>
<dbReference type="EC" id="4.3.2.10" evidence="1"/>
<dbReference type="EMBL" id="CP001601">
    <property type="protein sequence ID" value="ACP33210.1"/>
    <property type="molecule type" value="Genomic_DNA"/>
</dbReference>
<dbReference type="RefSeq" id="WP_010190470.1">
    <property type="nucleotide sequence ID" value="NZ_ACLH01000087.1"/>
</dbReference>
<dbReference type="SMR" id="C3PHA6"/>
<dbReference type="STRING" id="548476.cauri_1617"/>
<dbReference type="GeneID" id="31924248"/>
<dbReference type="KEGG" id="car:cauri_1617"/>
<dbReference type="eggNOG" id="COG0107">
    <property type="taxonomic scope" value="Bacteria"/>
</dbReference>
<dbReference type="HOGENOM" id="CLU_048577_4_0_11"/>
<dbReference type="OrthoDB" id="9781903at2"/>
<dbReference type="UniPathway" id="UPA00031">
    <property type="reaction ID" value="UER00010"/>
</dbReference>
<dbReference type="Proteomes" id="UP000002077">
    <property type="component" value="Chromosome"/>
</dbReference>
<dbReference type="GO" id="GO:0005737">
    <property type="term" value="C:cytoplasm"/>
    <property type="evidence" value="ECO:0007669"/>
    <property type="project" value="UniProtKB-SubCell"/>
</dbReference>
<dbReference type="GO" id="GO:0000107">
    <property type="term" value="F:imidazoleglycerol-phosphate synthase activity"/>
    <property type="evidence" value="ECO:0007669"/>
    <property type="project" value="UniProtKB-UniRule"/>
</dbReference>
<dbReference type="GO" id="GO:0016829">
    <property type="term" value="F:lyase activity"/>
    <property type="evidence" value="ECO:0007669"/>
    <property type="project" value="UniProtKB-KW"/>
</dbReference>
<dbReference type="GO" id="GO:0000105">
    <property type="term" value="P:L-histidine biosynthetic process"/>
    <property type="evidence" value="ECO:0007669"/>
    <property type="project" value="UniProtKB-UniRule"/>
</dbReference>
<dbReference type="CDD" id="cd04731">
    <property type="entry name" value="HisF"/>
    <property type="match status" value="1"/>
</dbReference>
<dbReference type="FunFam" id="3.20.20.70:FF:000006">
    <property type="entry name" value="Imidazole glycerol phosphate synthase subunit HisF"/>
    <property type="match status" value="1"/>
</dbReference>
<dbReference type="Gene3D" id="3.20.20.70">
    <property type="entry name" value="Aldolase class I"/>
    <property type="match status" value="1"/>
</dbReference>
<dbReference type="HAMAP" id="MF_01013">
    <property type="entry name" value="HisF"/>
    <property type="match status" value="1"/>
</dbReference>
<dbReference type="InterPro" id="IPR013785">
    <property type="entry name" value="Aldolase_TIM"/>
</dbReference>
<dbReference type="InterPro" id="IPR006062">
    <property type="entry name" value="His_biosynth"/>
</dbReference>
<dbReference type="InterPro" id="IPR004651">
    <property type="entry name" value="HisF"/>
</dbReference>
<dbReference type="InterPro" id="IPR050064">
    <property type="entry name" value="IGPS_HisA/HisF"/>
</dbReference>
<dbReference type="InterPro" id="IPR011060">
    <property type="entry name" value="RibuloseP-bd_barrel"/>
</dbReference>
<dbReference type="NCBIfam" id="TIGR00735">
    <property type="entry name" value="hisF"/>
    <property type="match status" value="1"/>
</dbReference>
<dbReference type="PANTHER" id="PTHR21235:SF2">
    <property type="entry name" value="IMIDAZOLE GLYCEROL PHOSPHATE SYNTHASE HISHF"/>
    <property type="match status" value="1"/>
</dbReference>
<dbReference type="PANTHER" id="PTHR21235">
    <property type="entry name" value="IMIDAZOLE GLYCEROL PHOSPHATE SYNTHASE SUBUNIT HISF/H IGP SYNTHASE SUBUNIT HISF/H"/>
    <property type="match status" value="1"/>
</dbReference>
<dbReference type="Pfam" id="PF00977">
    <property type="entry name" value="His_biosynth"/>
    <property type="match status" value="1"/>
</dbReference>
<dbReference type="SUPFAM" id="SSF51366">
    <property type="entry name" value="Ribulose-phoshate binding barrel"/>
    <property type="match status" value="1"/>
</dbReference>
<comment type="function">
    <text evidence="1">IGPS catalyzes the conversion of PRFAR and glutamine to IGP, AICAR and glutamate. The HisF subunit catalyzes the cyclization activity that produces IGP and AICAR from PRFAR using the ammonia provided by the HisH subunit.</text>
</comment>
<comment type="catalytic activity">
    <reaction evidence="1">
        <text>5-[(5-phospho-1-deoxy-D-ribulos-1-ylimino)methylamino]-1-(5-phospho-beta-D-ribosyl)imidazole-4-carboxamide + L-glutamine = D-erythro-1-(imidazol-4-yl)glycerol 3-phosphate + 5-amino-1-(5-phospho-beta-D-ribosyl)imidazole-4-carboxamide + L-glutamate + H(+)</text>
        <dbReference type="Rhea" id="RHEA:24793"/>
        <dbReference type="ChEBI" id="CHEBI:15378"/>
        <dbReference type="ChEBI" id="CHEBI:29985"/>
        <dbReference type="ChEBI" id="CHEBI:58278"/>
        <dbReference type="ChEBI" id="CHEBI:58359"/>
        <dbReference type="ChEBI" id="CHEBI:58475"/>
        <dbReference type="ChEBI" id="CHEBI:58525"/>
        <dbReference type="EC" id="4.3.2.10"/>
    </reaction>
</comment>
<comment type="pathway">
    <text evidence="1">Amino-acid biosynthesis; L-histidine biosynthesis; L-histidine from 5-phospho-alpha-D-ribose 1-diphosphate: step 5/9.</text>
</comment>
<comment type="subunit">
    <text evidence="1">Heterodimer of HisH and HisF.</text>
</comment>
<comment type="subcellular location">
    <subcellularLocation>
        <location evidence="1">Cytoplasm</location>
    </subcellularLocation>
</comment>
<comment type="similarity">
    <text evidence="1">Belongs to the HisA/HisF family.</text>
</comment>
<keyword id="KW-0028">Amino-acid biosynthesis</keyword>
<keyword id="KW-0963">Cytoplasm</keyword>
<keyword id="KW-0368">Histidine biosynthesis</keyword>
<keyword id="KW-0456">Lyase</keyword>
<keyword id="KW-1185">Reference proteome</keyword>
<feature type="chain" id="PRO_1000148915" description="Imidazole glycerol phosphate synthase subunit HisF">
    <location>
        <begin position="1"/>
        <end position="254"/>
    </location>
</feature>
<feature type="active site" evidence="1">
    <location>
        <position position="12"/>
    </location>
</feature>
<feature type="active site" evidence="1">
    <location>
        <position position="131"/>
    </location>
</feature>
<organism>
    <name type="scientific">Corynebacterium aurimucosum (strain ATCC 700975 / DSM 44827 / CIP 107346 / CN-1)</name>
    <name type="common">Corynebacterium nigricans</name>
    <dbReference type="NCBI Taxonomy" id="548476"/>
    <lineage>
        <taxon>Bacteria</taxon>
        <taxon>Bacillati</taxon>
        <taxon>Actinomycetota</taxon>
        <taxon>Actinomycetes</taxon>
        <taxon>Mycobacteriales</taxon>
        <taxon>Corynebacteriaceae</taxon>
        <taxon>Corynebacterium</taxon>
    </lineage>
</organism>
<name>HIS6_CORA7</name>
<accession>C3PHA6</accession>
<evidence type="ECO:0000255" key="1">
    <source>
        <dbReference type="HAMAP-Rule" id="MF_01013"/>
    </source>
</evidence>
<proteinExistence type="inferred from homology"/>
<reference key="1">
    <citation type="journal article" date="2010" name="BMC Genomics">
        <title>Complete genome sequence and lifestyle of black-pigmented Corynebacterium aurimucosum ATCC 700975 (formerly C. nigricans CN-1) isolated from a vaginal swab of a woman with spontaneous abortion.</title>
        <authorList>
            <person name="Trost E."/>
            <person name="Gotker S."/>
            <person name="Schneider J."/>
            <person name="Schneiker-Bekel S."/>
            <person name="Szczepanowski R."/>
            <person name="Tilker A."/>
            <person name="Viehoever P."/>
            <person name="Arnold W."/>
            <person name="Bekel T."/>
            <person name="Blom J."/>
            <person name="Gartemann K.H."/>
            <person name="Linke B."/>
            <person name="Goesmann A."/>
            <person name="Puhler A."/>
            <person name="Shukla S.K."/>
            <person name="Tauch A."/>
        </authorList>
    </citation>
    <scope>NUCLEOTIDE SEQUENCE [LARGE SCALE GENOMIC DNA]</scope>
    <source>
        <strain>ATCC 700975 / DSM 44827 / CIP 107346 / CN-1</strain>
    </source>
</reference>
<sequence length="254" mass="26482">MALAVRVIPCLDVDNGRVVKGVNFENLRDAGDPVELAARYGQVGADELTFLDVSASKDGRGTMLDVVRRTADQVFIPLTVGGGVRSVDDVRELLRAGADKVSVNSSAIARPELLRELADVFGSQCIVLSVDARRAADFPSGFEVTTHGGTRSAGLDAVEWAKRGEELGVGEILLNSMDGDGTKAGFDIELIEAVRAAVSVPIIASGGAGKAEHFPPAVDAGADAVLAASIFHFGEVEISEVKEALAAAGKEVRQ</sequence>